<keyword id="KW-0414">Isoprene biosynthesis</keyword>
<keyword id="KW-0460">Magnesium</keyword>
<keyword id="KW-0479">Metal-binding</keyword>
<keyword id="KW-1185">Reference proteome</keyword>
<keyword id="KW-0784">Thiamine biosynthesis</keyword>
<keyword id="KW-0786">Thiamine pyrophosphate</keyword>
<keyword id="KW-0808">Transferase</keyword>
<name>DXS_PROM0</name>
<gene>
    <name evidence="1" type="primary">dxs</name>
    <name type="ordered locus">P9301_09521</name>
</gene>
<organism>
    <name type="scientific">Prochlorococcus marinus (strain MIT 9301)</name>
    <dbReference type="NCBI Taxonomy" id="167546"/>
    <lineage>
        <taxon>Bacteria</taxon>
        <taxon>Bacillati</taxon>
        <taxon>Cyanobacteriota</taxon>
        <taxon>Cyanophyceae</taxon>
        <taxon>Synechococcales</taxon>
        <taxon>Prochlorococcaceae</taxon>
        <taxon>Prochlorococcus</taxon>
    </lineage>
</organism>
<comment type="function">
    <text evidence="1">Catalyzes the acyloin condensation reaction between C atoms 2 and 3 of pyruvate and glyceraldehyde 3-phosphate to yield 1-deoxy-D-xylulose-5-phosphate (DXP).</text>
</comment>
<comment type="catalytic activity">
    <reaction evidence="1">
        <text>D-glyceraldehyde 3-phosphate + pyruvate + H(+) = 1-deoxy-D-xylulose 5-phosphate + CO2</text>
        <dbReference type="Rhea" id="RHEA:12605"/>
        <dbReference type="ChEBI" id="CHEBI:15361"/>
        <dbReference type="ChEBI" id="CHEBI:15378"/>
        <dbReference type="ChEBI" id="CHEBI:16526"/>
        <dbReference type="ChEBI" id="CHEBI:57792"/>
        <dbReference type="ChEBI" id="CHEBI:59776"/>
        <dbReference type="EC" id="2.2.1.7"/>
    </reaction>
</comment>
<comment type="cofactor">
    <cofactor evidence="1">
        <name>Mg(2+)</name>
        <dbReference type="ChEBI" id="CHEBI:18420"/>
    </cofactor>
    <text evidence="1">Binds 1 Mg(2+) ion per subunit.</text>
</comment>
<comment type="cofactor">
    <cofactor evidence="1">
        <name>thiamine diphosphate</name>
        <dbReference type="ChEBI" id="CHEBI:58937"/>
    </cofactor>
    <text evidence="1">Binds 1 thiamine pyrophosphate per subunit.</text>
</comment>
<comment type="pathway">
    <text evidence="1">Metabolic intermediate biosynthesis; 1-deoxy-D-xylulose 5-phosphate biosynthesis; 1-deoxy-D-xylulose 5-phosphate from D-glyceraldehyde 3-phosphate and pyruvate: step 1/1.</text>
</comment>
<comment type="subunit">
    <text evidence="1">Homodimer.</text>
</comment>
<comment type="similarity">
    <text evidence="1">Belongs to the transketolase family. DXPS subfamily.</text>
</comment>
<accession>A3PCV0</accession>
<dbReference type="EC" id="2.2.1.7" evidence="1"/>
<dbReference type="EMBL" id="CP000576">
    <property type="protein sequence ID" value="ABO17575.1"/>
    <property type="molecule type" value="Genomic_DNA"/>
</dbReference>
<dbReference type="RefSeq" id="WP_011862923.1">
    <property type="nucleotide sequence ID" value="NC_009091.1"/>
</dbReference>
<dbReference type="SMR" id="A3PCV0"/>
<dbReference type="STRING" id="167546.P9301_09521"/>
<dbReference type="KEGG" id="pmg:P9301_09521"/>
<dbReference type="eggNOG" id="COG1154">
    <property type="taxonomic scope" value="Bacteria"/>
</dbReference>
<dbReference type="HOGENOM" id="CLU_009227_1_4_3"/>
<dbReference type="OrthoDB" id="9803371at2"/>
<dbReference type="UniPathway" id="UPA00064">
    <property type="reaction ID" value="UER00091"/>
</dbReference>
<dbReference type="Proteomes" id="UP000001430">
    <property type="component" value="Chromosome"/>
</dbReference>
<dbReference type="GO" id="GO:0005829">
    <property type="term" value="C:cytosol"/>
    <property type="evidence" value="ECO:0007669"/>
    <property type="project" value="TreeGrafter"/>
</dbReference>
<dbReference type="GO" id="GO:0008661">
    <property type="term" value="F:1-deoxy-D-xylulose-5-phosphate synthase activity"/>
    <property type="evidence" value="ECO:0007669"/>
    <property type="project" value="UniProtKB-UniRule"/>
</dbReference>
<dbReference type="GO" id="GO:0000287">
    <property type="term" value="F:magnesium ion binding"/>
    <property type="evidence" value="ECO:0007669"/>
    <property type="project" value="UniProtKB-UniRule"/>
</dbReference>
<dbReference type="GO" id="GO:0030976">
    <property type="term" value="F:thiamine pyrophosphate binding"/>
    <property type="evidence" value="ECO:0007669"/>
    <property type="project" value="UniProtKB-UniRule"/>
</dbReference>
<dbReference type="GO" id="GO:0052865">
    <property type="term" value="P:1-deoxy-D-xylulose 5-phosphate biosynthetic process"/>
    <property type="evidence" value="ECO:0007669"/>
    <property type="project" value="UniProtKB-UniPathway"/>
</dbReference>
<dbReference type="GO" id="GO:0019288">
    <property type="term" value="P:isopentenyl diphosphate biosynthetic process, methylerythritol 4-phosphate pathway"/>
    <property type="evidence" value="ECO:0007669"/>
    <property type="project" value="TreeGrafter"/>
</dbReference>
<dbReference type="GO" id="GO:0016114">
    <property type="term" value="P:terpenoid biosynthetic process"/>
    <property type="evidence" value="ECO:0007669"/>
    <property type="project" value="UniProtKB-UniRule"/>
</dbReference>
<dbReference type="GO" id="GO:0009228">
    <property type="term" value="P:thiamine biosynthetic process"/>
    <property type="evidence" value="ECO:0007669"/>
    <property type="project" value="UniProtKB-UniRule"/>
</dbReference>
<dbReference type="CDD" id="cd02007">
    <property type="entry name" value="TPP_DXS"/>
    <property type="match status" value="1"/>
</dbReference>
<dbReference type="CDD" id="cd07033">
    <property type="entry name" value="TPP_PYR_DXS_TK_like"/>
    <property type="match status" value="1"/>
</dbReference>
<dbReference type="FunFam" id="3.40.50.920:FF:000002">
    <property type="entry name" value="1-deoxy-D-xylulose-5-phosphate synthase"/>
    <property type="match status" value="1"/>
</dbReference>
<dbReference type="FunFam" id="3.40.50.970:FF:000005">
    <property type="entry name" value="1-deoxy-D-xylulose-5-phosphate synthase"/>
    <property type="match status" value="1"/>
</dbReference>
<dbReference type="Gene3D" id="3.40.50.920">
    <property type="match status" value="1"/>
</dbReference>
<dbReference type="Gene3D" id="3.40.50.970">
    <property type="match status" value="2"/>
</dbReference>
<dbReference type="HAMAP" id="MF_00315">
    <property type="entry name" value="DXP_synth"/>
    <property type="match status" value="1"/>
</dbReference>
<dbReference type="InterPro" id="IPR005477">
    <property type="entry name" value="Dxylulose-5-P_synthase"/>
</dbReference>
<dbReference type="InterPro" id="IPR029061">
    <property type="entry name" value="THDP-binding"/>
</dbReference>
<dbReference type="InterPro" id="IPR009014">
    <property type="entry name" value="Transketo_C/PFOR_II"/>
</dbReference>
<dbReference type="InterPro" id="IPR005475">
    <property type="entry name" value="Transketolase-like_Pyr-bd"/>
</dbReference>
<dbReference type="InterPro" id="IPR020826">
    <property type="entry name" value="Transketolase_BS"/>
</dbReference>
<dbReference type="InterPro" id="IPR033248">
    <property type="entry name" value="Transketolase_C"/>
</dbReference>
<dbReference type="InterPro" id="IPR049557">
    <property type="entry name" value="Transketolase_CS"/>
</dbReference>
<dbReference type="NCBIfam" id="TIGR00204">
    <property type="entry name" value="dxs"/>
    <property type="match status" value="1"/>
</dbReference>
<dbReference type="NCBIfam" id="NF003933">
    <property type="entry name" value="PRK05444.2-2"/>
    <property type="match status" value="1"/>
</dbReference>
<dbReference type="PANTHER" id="PTHR43322">
    <property type="entry name" value="1-D-DEOXYXYLULOSE 5-PHOSPHATE SYNTHASE-RELATED"/>
    <property type="match status" value="1"/>
</dbReference>
<dbReference type="PANTHER" id="PTHR43322:SF5">
    <property type="entry name" value="1-DEOXY-D-XYLULOSE-5-PHOSPHATE SYNTHASE, CHLOROPLASTIC"/>
    <property type="match status" value="1"/>
</dbReference>
<dbReference type="Pfam" id="PF13292">
    <property type="entry name" value="DXP_synthase_N"/>
    <property type="match status" value="1"/>
</dbReference>
<dbReference type="Pfam" id="PF02779">
    <property type="entry name" value="Transket_pyr"/>
    <property type="match status" value="1"/>
</dbReference>
<dbReference type="Pfam" id="PF02780">
    <property type="entry name" value="Transketolase_C"/>
    <property type="match status" value="1"/>
</dbReference>
<dbReference type="SMART" id="SM00861">
    <property type="entry name" value="Transket_pyr"/>
    <property type="match status" value="1"/>
</dbReference>
<dbReference type="SUPFAM" id="SSF52518">
    <property type="entry name" value="Thiamin diphosphate-binding fold (THDP-binding)"/>
    <property type="match status" value="2"/>
</dbReference>
<dbReference type="SUPFAM" id="SSF52922">
    <property type="entry name" value="TK C-terminal domain-like"/>
    <property type="match status" value="1"/>
</dbReference>
<dbReference type="PROSITE" id="PS00801">
    <property type="entry name" value="TRANSKETOLASE_1"/>
    <property type="match status" value="1"/>
</dbReference>
<dbReference type="PROSITE" id="PS00802">
    <property type="entry name" value="TRANSKETOLASE_2"/>
    <property type="match status" value="1"/>
</dbReference>
<feature type="chain" id="PRO_1000019055" description="1-deoxy-D-xylulose-5-phosphate synthase">
    <location>
        <begin position="1"/>
        <end position="629"/>
    </location>
</feature>
<feature type="binding site" evidence="1">
    <location>
        <position position="72"/>
    </location>
    <ligand>
        <name>thiamine diphosphate</name>
        <dbReference type="ChEBI" id="CHEBI:58937"/>
    </ligand>
</feature>
<feature type="binding site" evidence="1">
    <location>
        <begin position="113"/>
        <end position="115"/>
    </location>
    <ligand>
        <name>thiamine diphosphate</name>
        <dbReference type="ChEBI" id="CHEBI:58937"/>
    </ligand>
</feature>
<feature type="binding site" evidence="1">
    <location>
        <position position="144"/>
    </location>
    <ligand>
        <name>Mg(2+)</name>
        <dbReference type="ChEBI" id="CHEBI:18420"/>
    </ligand>
</feature>
<feature type="binding site" evidence="1">
    <location>
        <begin position="145"/>
        <end position="146"/>
    </location>
    <ligand>
        <name>thiamine diphosphate</name>
        <dbReference type="ChEBI" id="CHEBI:58937"/>
    </ligand>
</feature>
<feature type="binding site" evidence="1">
    <location>
        <position position="174"/>
    </location>
    <ligand>
        <name>Mg(2+)</name>
        <dbReference type="ChEBI" id="CHEBI:18420"/>
    </ligand>
</feature>
<feature type="binding site" evidence="1">
    <location>
        <position position="174"/>
    </location>
    <ligand>
        <name>thiamine diphosphate</name>
        <dbReference type="ChEBI" id="CHEBI:58937"/>
    </ligand>
</feature>
<feature type="binding site" evidence="1">
    <location>
        <position position="287"/>
    </location>
    <ligand>
        <name>thiamine diphosphate</name>
        <dbReference type="ChEBI" id="CHEBI:58937"/>
    </ligand>
</feature>
<feature type="binding site" evidence="1">
    <location>
        <position position="370"/>
    </location>
    <ligand>
        <name>thiamine diphosphate</name>
        <dbReference type="ChEBI" id="CHEBI:58937"/>
    </ligand>
</feature>
<protein>
    <recommendedName>
        <fullName evidence="1">1-deoxy-D-xylulose-5-phosphate synthase</fullName>
        <ecNumber evidence="1">2.2.1.7</ecNumber>
    </recommendedName>
    <alternativeName>
        <fullName evidence="1">1-deoxyxylulose-5-phosphate synthase</fullName>
        <shortName evidence="1">DXP synthase</shortName>
        <shortName evidence="1">DXPS</shortName>
    </alternativeName>
</protein>
<proteinExistence type="inferred from homology"/>
<sequence>MLLSELSHPNQLHGLTVSQLEEIACQIRERHLQVVSTSGGHLGPGLGVVELTLALYQTLDLDFDKVVWDVGHQGYPHKLITGRFSQFDSLRQQNGVAGYLKRSESKFDHFGAGHASTSISAALGMAIARDRKGDNYKCVAVIGDGALTGGMALEAINHAGHLPNTPLVVVLNDNDMSISPPVGALSSYLNKVRVSPPLQFLSDSVQESVKNIPLIGKDIPEELKNIKGSVRRLSVPKVGAVFEELGFTYMGPIDGHDIGNLVKTFNAAHKLKRPVLVHVVTTKGKGYPYAEADQVGYHAQSAFDLTTGKSIPSKKPKPVSYSKIFGQTLLKICEQDSKVVGITAAMATGTGLDILQKNIPDQYIDVGIAEQHAVTLAAGMSCDGLKPVVAIYSTFLQRAFDQLIHDVGIQNLPVSFVLDRAGIVGADGPTHQGQYDISYMRSIPNFVLMAPKDESELQRMLITSINHNGPTALRIPRGSGLGVAIMDEGWEPLNIGEAEIIEGGEDILIIAYGSMVASAIETAKILKNMNINACIVNARFVKPLDKNLIMPLASRIQKVVTMEEGTLIGGFGSAIVELFNDNEINIPVYRIGIPDVLVDHASPDQSKEKLGLMPDQMADNIVKKFKLVN</sequence>
<reference key="1">
    <citation type="journal article" date="2007" name="PLoS Genet.">
        <title>Patterns and implications of gene gain and loss in the evolution of Prochlorococcus.</title>
        <authorList>
            <person name="Kettler G.C."/>
            <person name="Martiny A.C."/>
            <person name="Huang K."/>
            <person name="Zucker J."/>
            <person name="Coleman M.L."/>
            <person name="Rodrigue S."/>
            <person name="Chen F."/>
            <person name="Lapidus A."/>
            <person name="Ferriera S."/>
            <person name="Johnson J."/>
            <person name="Steglich C."/>
            <person name="Church G.M."/>
            <person name="Richardson P."/>
            <person name="Chisholm S.W."/>
        </authorList>
    </citation>
    <scope>NUCLEOTIDE SEQUENCE [LARGE SCALE GENOMIC DNA]</scope>
    <source>
        <strain>MIT 9301</strain>
    </source>
</reference>
<evidence type="ECO:0000255" key="1">
    <source>
        <dbReference type="HAMAP-Rule" id="MF_00315"/>
    </source>
</evidence>